<accession>P74102</accession>
<gene>
    <name type="ordered locus">slr1963</name>
</gene>
<organism>
    <name type="scientific">Synechocystis sp. (strain ATCC 27184 / PCC 6803 / Kazusa)</name>
    <dbReference type="NCBI Taxonomy" id="1111708"/>
    <lineage>
        <taxon>Bacteria</taxon>
        <taxon>Bacillati</taxon>
        <taxon>Cyanobacteriota</taxon>
        <taxon>Cyanophyceae</taxon>
        <taxon>Synechococcales</taxon>
        <taxon>Merismopediaceae</taxon>
        <taxon>Synechocystis</taxon>
    </lineage>
</organism>
<reference evidence="12" key="1">
    <citation type="journal article" date="1997" name="Biochim. Biophys. Acta">
        <title>The orange carotenoid protein of Synechocystis PCC 6803.</title>
        <authorList>
            <person name="Wu Y.P."/>
            <person name="Krogmann D.W."/>
        </authorList>
    </citation>
    <scope>NUCLEOTIDE SEQUENCE [GENOMIC DNA]</scope>
    <scope>PROTEIN SEQUENCE OF 2-60</scope>
    <scope>MASS SPECTROMETRY</scope>
    <scope>PROTEOLYTIC CLEAVAGE</scope>
</reference>
<reference evidence="13" key="2">
    <citation type="journal article" date="1996" name="DNA Res.">
        <title>Sequence analysis of the genome of the unicellular cyanobacterium Synechocystis sp. strain PCC6803. II. Sequence determination of the entire genome and assignment of potential protein-coding regions.</title>
        <authorList>
            <person name="Kaneko T."/>
            <person name="Sato S."/>
            <person name="Kotani H."/>
            <person name="Tanaka A."/>
            <person name="Asamizu E."/>
            <person name="Nakamura Y."/>
            <person name="Miyajima N."/>
            <person name="Hirosawa M."/>
            <person name="Sugiura M."/>
            <person name="Sasamoto S."/>
            <person name="Kimura T."/>
            <person name="Hosouchi T."/>
            <person name="Matsuno A."/>
            <person name="Muraki A."/>
            <person name="Nakazaki N."/>
            <person name="Naruo K."/>
            <person name="Okumura S."/>
            <person name="Shimpo S."/>
            <person name="Takeuchi C."/>
            <person name="Wada T."/>
            <person name="Watanabe A."/>
            <person name="Yamada M."/>
            <person name="Yasuda M."/>
            <person name="Tabata S."/>
        </authorList>
    </citation>
    <scope>NUCLEOTIDE SEQUENCE [LARGE SCALE GENOMIC DNA]</scope>
    <source>
        <strain>ATCC 27184 / PCC 6803 / Kazusa</strain>
    </source>
</reference>
<reference evidence="12" key="3">
    <citation type="journal article" date="2004" name="Arch. Biochem. Biophys.">
        <title>Water-soluble carotenoid proteins of cyanobacteria.</title>
        <authorList>
            <person name="Kerfeld C.A."/>
        </authorList>
    </citation>
    <scope>REVIEW</scope>
</reference>
<reference evidence="12" key="4">
    <citation type="journal article" date="2006" name="Plant Cell">
        <title>A soluble carotenoid protein involved in phycobilisome-related energy dissipation in cyanobacteria.</title>
        <authorList>
            <person name="Wilson A."/>
            <person name="Ajlani G."/>
            <person name="Verbavatz J.M."/>
            <person name="Vass I."/>
            <person name="Kerfeld C.A."/>
            <person name="Kirilovsky D."/>
        </authorList>
    </citation>
    <scope>FUNCTION</scope>
    <scope>SUBCELLULAR LOCATION</scope>
    <scope>DISRUPTION PHENOTYPE</scope>
    <source>
        <strain>ATCC 27184 / PCC 6803 / Kazusa</strain>
    </source>
</reference>
<reference key="5">
    <citation type="journal article" date="2008" name="Proc. Natl. Acad. Sci. U.S.A.">
        <title>A photoactive carotenoid protein acting as light intensity sensor.</title>
        <authorList>
            <person name="Wilson A."/>
            <person name="Punginelli C."/>
            <person name="Gall A."/>
            <person name="Bonetti C."/>
            <person name="Alexandre M."/>
            <person name="Routaboul J.M."/>
            <person name="Kerfeld C.A."/>
            <person name="van Grondelle R."/>
            <person name="Robert B."/>
            <person name="Kennis J.T."/>
            <person name="Kirilovsky D."/>
        </authorList>
    </citation>
    <scope>FUNCTION</scope>
    <scope>COFACTOR</scope>
    <scope>BIOPHYSICOCHEMICAL PROPERTIES</scope>
    <scope>MUTAGENESIS OF TRP-110</scope>
    <source>
        <strain>ATCC 27184 / PCC 6803 / Kazusa</strain>
    </source>
</reference>
<reference key="6">
    <citation type="journal article" date="2010" name="Proc. Natl. Acad. Sci. U.S.A.">
        <title>Identification of a protein required for recovery of full antenna capacity in OCP-related photoprotective mechanism in cyanobacteria.</title>
        <authorList>
            <person name="Boulay C."/>
            <person name="Wilson A."/>
            <person name="D'Haene S."/>
            <person name="Kirilovsky D."/>
        </authorList>
    </citation>
    <scope>INTERACTION WITH FRP</scope>
    <scope>SUBUNIT</scope>
    <scope>INDUCTION</scope>
    <source>
        <strain>ATCC 27184 / PCC 6803 / Kazusa</strain>
    </source>
</reference>
<reference key="7">
    <citation type="journal article" date="2011" name="Plant Cell">
        <title>In vitro reconstitution of the cyanobacterial photoprotective mechanism mediated by the orange carotenoid protein in Synechocystis PCC 6803.</title>
        <authorList>
            <person name="Gwizdala M."/>
            <person name="Wilson A."/>
            <person name="Kirilovsky D."/>
        </authorList>
    </citation>
    <scope>FUNCTION</scope>
    <scope>SUBUNIT</scope>
    <scope>DISRUPTION PHENOTYPE</scope>
    <scope>MUTAGENESIS OF TYR-44</scope>
    <source>
        <strain>ATCC 27184 / PCC 6803 / Kazusa</strain>
    </source>
</reference>
<reference key="8">
    <citation type="journal article" date="2013" name="Proc. Natl. Acad. Sci. U.S.A.">
        <title>Crystal structure of the FRP and identification of the active site for modulation of OCP-mediated photoprotection in cyanobacteria.</title>
        <authorList>
            <person name="Sutter M."/>
            <person name="Wilson A."/>
            <person name="Leverenz R.L."/>
            <person name="Lopez-Igual R."/>
            <person name="Thurotte A."/>
            <person name="Salmeen A.E."/>
            <person name="Kirilovsky D."/>
            <person name="Kerfeld C.A."/>
        </authorList>
    </citation>
    <scope>FUNCTION</scope>
    <scope>INTERACTION WITH FRP</scope>
    <scope>SUBUNIT</scope>
    <scope>DOMAIN</scope>
    <source>
        <strain>ATCC 27184 / PCC 6803 / Kazusa</strain>
    </source>
</reference>
<reference key="9">
    <citation type="journal article" date="2011" name="Biochim. Biophys. Acta">
        <title>A kinetic model of non-photochemical quenching in cyanobacteria.</title>
        <authorList>
            <person name="Gorbunov M.Y."/>
            <person name="Kuzminov F.I."/>
            <person name="Fadeev V.V."/>
            <person name="Kim J.D."/>
            <person name="Falkowski P.G."/>
        </authorList>
    </citation>
    <scope>POSSIBLE REACTION MECHANISM</scope>
    <source>
        <strain>ATCC 27184 / PCC 6803 / Kazusa</strain>
    </source>
</reference>
<reference key="10">
    <citation type="journal article" date="2010" name="J. Biol. Chem.">
        <title>Structural determinants underlying photoprotection in the photoactive orange carotenoid protein of cyanobacteria.</title>
        <authorList>
            <person name="Wilson A."/>
            <person name="Kinney J.N."/>
            <person name="Zwart P.H."/>
            <person name="Punginelli C."/>
            <person name="D'Haene S."/>
            <person name="Perreau F."/>
            <person name="Klein M.G."/>
            <person name="Kirilovsky D."/>
            <person name="Kerfeld C.A."/>
        </authorList>
    </citation>
    <scope>X-RAY CRYSTALLOGRAPHY (1.65 ANGSTROMS) OF 1-316 IN COMPLEX WITH CAROTENOID</scope>
    <scope>FUNCTION</scope>
    <scope>COFACTOR</scope>
    <scope>BIOPHYSICOCHEMICAL PROPERTIES</scope>
    <scope>SUBUNIT</scope>
    <scope>MUTAGENESIS OF TYR-44; TRP-110 AND ARG-155</scope>
</reference>
<reference key="11">
    <citation type="journal article" date="2015" name="Science">
        <title>A 12 Angstrom carotenoid translocation in a photoswitch associated with cyanobacterial photoprotection.</title>
        <authorList>
            <person name="Leverenz R.L."/>
            <person name="Sutter M."/>
            <person name="Wilson A."/>
            <person name="Gupta S."/>
            <person name="Thurotte A."/>
            <person name="Bourcier de Carbon C."/>
            <person name="Petzold C.J."/>
            <person name="Ralston C."/>
            <person name="Perreau F."/>
            <person name="Kirilovsky D."/>
            <person name="Kerfeld C.A."/>
        </authorList>
    </citation>
    <scope>X-RAY CRYSTALLOGRAPHY (1.54 ANGSTROMS) OF 21-165 (RCP) IN COMPLEX WITH CAROTENOID</scope>
    <scope>X-RAY CRYSTALLOGRAPHY (1.90 ANGSTROMS) OF 2-317 (OCP) IN COMPLEX WITH CAROTENOID</scope>
    <scope>COFACTOR</scope>
    <scope>DOMAIN</scope>
    <scope>MUTAGENESIS OF GLU-34; CYS-84; PRO-126; 126-PRO--TYR-129 AND TYR-129</scope>
    <source>
        <strain>ATCC 27184 / PCC 6803 / Kazusa</strain>
    </source>
</reference>
<name>OCP_SYNY3</name>
<evidence type="ECO:0000255" key="1">
    <source>
        <dbReference type="PROSITE-ProRule" id="PRU01109"/>
    </source>
</evidence>
<evidence type="ECO:0000269" key="2">
    <source>
    </source>
</evidence>
<evidence type="ECO:0000269" key="3">
    <source>
    </source>
</evidence>
<evidence type="ECO:0000269" key="4">
    <source>
    </source>
</evidence>
<evidence type="ECO:0000269" key="5">
    <source>
    </source>
</evidence>
<evidence type="ECO:0000269" key="6">
    <source>
    </source>
</evidence>
<evidence type="ECO:0000269" key="7">
    <source>
    </source>
</evidence>
<evidence type="ECO:0000269" key="8">
    <source>
    </source>
</evidence>
<evidence type="ECO:0000269" key="9">
    <source>
    </source>
</evidence>
<evidence type="ECO:0000269" key="10">
    <source>
    </source>
</evidence>
<evidence type="ECO:0000303" key="11">
    <source>
    </source>
</evidence>
<evidence type="ECO:0000305" key="12"/>
<evidence type="ECO:0000312" key="13">
    <source>
        <dbReference type="EMBL" id="BAA18188.1"/>
    </source>
</evidence>
<evidence type="ECO:0007829" key="14">
    <source>
        <dbReference type="PDB" id="4XB4"/>
    </source>
</evidence>
<evidence type="ECO:0007829" key="15">
    <source>
        <dbReference type="PDB" id="7ZSF"/>
    </source>
</evidence>
<evidence type="ECO:0007829" key="16">
    <source>
        <dbReference type="PDB" id="7ZSJ"/>
    </source>
</evidence>
<feature type="initiator methionine" description="Removed" evidence="10">
    <location>
        <position position="1"/>
    </location>
</feature>
<feature type="chain" id="PRO_0000282352" description="Orange carotenoid-binding protein" evidence="10">
    <location>
        <begin position="2"/>
        <end position="317"/>
    </location>
</feature>
<feature type="chain" id="PRO_0000282353" description="Red carotenoid-binding protein" evidence="10">
    <location>
        <begin position="16"/>
        <end status="unknown"/>
    </location>
</feature>
<feature type="domain" description="OCP N-terminal" evidence="1">
    <location>
        <begin position="18"/>
        <end position="169"/>
    </location>
</feature>
<feature type="binding site" description="only in form RCP" evidence="9">
    <location>
        <begin position="34"/>
        <end position="38"/>
    </location>
    <ligand>
        <name>echinenone</name>
        <dbReference type="ChEBI" id="CHEBI:4746"/>
    </ligand>
</feature>
<feature type="binding site" description="in forms OCP and RCP" evidence="4 9">
    <location>
        <begin position="37"/>
        <end position="44"/>
    </location>
    <ligand>
        <name>echinenone</name>
        <dbReference type="ChEBI" id="CHEBI:4746"/>
    </ligand>
</feature>
<feature type="binding site" description="only in form RCP" evidence="9">
    <location>
        <begin position="80"/>
        <end position="83"/>
    </location>
    <ligand>
        <name>echinenone</name>
        <dbReference type="ChEBI" id="CHEBI:4746"/>
    </ligand>
</feature>
<feature type="binding site" description="in forms OCP and RCP" evidence="4 9">
    <location>
        <begin position="107"/>
        <end position="117"/>
    </location>
    <ligand>
        <name>echinenone</name>
        <dbReference type="ChEBI" id="CHEBI:4746"/>
    </ligand>
</feature>
<feature type="binding site" description="only in form RCP" evidence="9">
    <location>
        <begin position="125"/>
        <end position="129"/>
    </location>
    <ligand>
        <name>echinenone</name>
        <dbReference type="ChEBI" id="CHEBI:4746"/>
    </ligand>
</feature>
<feature type="binding site" description="residues alter contact in forms OCP and RCP" evidence="4 9">
    <location>
        <begin position="151"/>
        <end position="161"/>
    </location>
    <ligand>
        <name>echinenone</name>
        <dbReference type="ChEBI" id="CHEBI:4746"/>
    </ligand>
</feature>
<feature type="binding site" description="only in form OCP" evidence="4 9">
    <location>
        <position position="201"/>
    </location>
    <ligand>
        <name>echinenone</name>
        <dbReference type="ChEBI" id="CHEBI:4746"/>
    </ligand>
</feature>
<feature type="binding site" description="only in form OCP" evidence="4 9">
    <location>
        <begin position="245"/>
        <end position="250"/>
    </location>
    <ligand>
        <name>echinenone</name>
        <dbReference type="ChEBI" id="CHEBI:4746"/>
    </ligand>
</feature>
<feature type="binding site" description="only in form OCP" evidence="4 9">
    <location>
        <begin position="273"/>
        <end position="284"/>
    </location>
    <ligand>
        <name>echinenone</name>
        <dbReference type="ChEBI" id="CHEBI:4746"/>
    </ligand>
</feature>
<feature type="binding site" description="only in form OCP" evidence="4 9">
    <location>
        <position position="288"/>
    </location>
    <ligand>
        <name>echinenone</name>
        <dbReference type="ChEBI" id="CHEBI:4746"/>
    </ligand>
</feature>
<feature type="mutagenesis site" description="Alters carotenoid specificity, &lt;40% quenching, decreases stability of OCP-R, accelerates OCP-R to OCP-O reversion." evidence="9">
    <original>E</original>
    <variation>A</variation>
    <location>
        <position position="34"/>
    </location>
</feature>
<feature type="mutagenesis site" description="Acts like wild-type." evidence="4">
    <original>Y</original>
    <variation>F</variation>
    <location>
        <position position="44"/>
    </location>
</feature>
<feature type="mutagenesis site" description="Cannot convert to red form (OCP-R), no NPQ. Does not bind to phycobilisomes." evidence="4 6">
    <original>Y</original>
    <variation>S</variation>
    <location>
        <position position="44"/>
    </location>
</feature>
<feature type="mutagenesis site" description="&lt;40% quenching, decreases stability of OCP-R, accelerates OCP-R to OCP-O reversion." evidence="9">
    <original>C</original>
    <variation>A</variation>
    <location>
        <position position="84"/>
    </location>
</feature>
<feature type="mutagenesis site" description="Acts like wild-type." evidence="4">
    <original>W</original>
    <variation>F</variation>
    <location>
        <position position="110"/>
    </location>
</feature>
<feature type="mutagenesis site" description="Incomplete conversion to red form (OCP-R), no NPQ." evidence="3 4">
    <original>W</original>
    <variation>S</variation>
    <location>
        <position position="110"/>
    </location>
</feature>
<feature type="mutagenesis site" description="Cannot convert to red form (OCP-R)." evidence="9">
    <original>PAGY</original>
    <variation>VAGF</variation>
    <location>
        <begin position="126"/>
        <end position="129"/>
    </location>
</feature>
<feature type="mutagenesis site" description="&lt;40% quenching, decreases stability of OCP-R, accelerates OCP-R to OCP-O reversion." evidence="9">
    <original>P</original>
    <variation>V</variation>
    <location>
        <position position="126"/>
    </location>
</feature>
<feature type="mutagenesis site" description="&lt;40% quenching, decreases stability of OCP-R, accelerates OCP-R to OCP-O reversion." evidence="9">
    <original>Y</original>
    <variation>F</variation>
    <location>
        <position position="129"/>
    </location>
</feature>
<feature type="mutagenesis site" description="Able to convert to red form (OCP-R), no NPQ." evidence="4">
    <original>R</original>
    <variation>L</variation>
    <location>
        <position position="155"/>
    </location>
</feature>
<feature type="sequence conflict" description="In Ref. 1; AA sequence." evidence="12" ref="1">
    <original>A</original>
    <variation>G</variation>
    <location>
        <position position="73"/>
    </location>
</feature>
<feature type="sequence conflict" description="In Ref. 1; AA sequence." evidence="12" ref="1">
    <original>G</original>
    <variation>T</variation>
    <location>
        <position position="75"/>
    </location>
</feature>
<feature type="sequence conflict" description="In Ref. 1; AA sequence." evidence="12" ref="1">
    <original>F</original>
    <variation>L</variation>
    <location>
        <position position="121"/>
    </location>
</feature>
<feature type="sequence conflict" description="In Ref. 1; AA sequence." evidence="12" ref="1">
    <original>A</original>
    <variation>V</variation>
    <location>
        <position position="165"/>
    </location>
</feature>
<feature type="sequence conflict" description="In Ref. 1; AA sequence." evidence="12" ref="1">
    <original>G</original>
    <variation>I</variation>
    <location>
        <position position="169"/>
    </location>
</feature>
<feature type="helix" evidence="15">
    <location>
        <begin position="5"/>
        <end position="8"/>
    </location>
</feature>
<feature type="helix" evidence="15">
    <location>
        <begin position="20"/>
        <end position="29"/>
    </location>
</feature>
<feature type="helix" evidence="15">
    <location>
        <begin position="33"/>
        <end position="48"/>
    </location>
</feature>
<feature type="helix" evidence="14">
    <location>
        <begin position="51"/>
        <end position="54"/>
    </location>
</feature>
<feature type="helix" evidence="15">
    <location>
        <begin position="58"/>
        <end position="63"/>
    </location>
</feature>
<feature type="helix" evidence="15">
    <location>
        <begin position="65"/>
        <end position="73"/>
    </location>
</feature>
<feature type="helix" evidence="15">
    <location>
        <begin position="76"/>
        <end position="88"/>
    </location>
</feature>
<feature type="helix" evidence="15">
    <location>
        <begin position="93"/>
        <end position="99"/>
    </location>
</feature>
<feature type="helix" evidence="15">
    <location>
        <begin position="103"/>
        <end position="118"/>
    </location>
</feature>
<feature type="helix" evidence="15">
    <location>
        <begin position="133"/>
        <end position="143"/>
    </location>
</feature>
<feature type="helix" evidence="15">
    <location>
        <begin position="147"/>
        <end position="160"/>
    </location>
</feature>
<feature type="strand" evidence="16">
    <location>
        <begin position="166"/>
        <end position="168"/>
    </location>
</feature>
<feature type="helix" evidence="15">
    <location>
        <begin position="182"/>
        <end position="184"/>
    </location>
</feature>
<feature type="helix" evidence="15">
    <location>
        <begin position="196"/>
        <end position="206"/>
    </location>
</feature>
<feature type="helix" evidence="15">
    <location>
        <begin position="210"/>
        <end position="214"/>
    </location>
</feature>
<feature type="strand" evidence="15">
    <location>
        <begin position="217"/>
        <end position="224"/>
    </location>
</feature>
<feature type="strand" evidence="15">
    <location>
        <begin position="231"/>
        <end position="233"/>
    </location>
</feature>
<feature type="helix" evidence="15">
    <location>
        <begin position="234"/>
        <end position="244"/>
    </location>
</feature>
<feature type="strand" evidence="15">
    <location>
        <begin position="249"/>
        <end position="259"/>
    </location>
</feature>
<feature type="helix" evidence="15">
    <location>
        <begin position="261"/>
        <end position="263"/>
    </location>
</feature>
<feature type="strand" evidence="15">
    <location>
        <begin position="265"/>
        <end position="274"/>
    </location>
</feature>
<feature type="turn" evidence="15">
    <location>
        <begin position="276"/>
        <end position="278"/>
    </location>
</feature>
<feature type="helix" evidence="15">
    <location>
        <begin position="279"/>
        <end position="281"/>
    </location>
</feature>
<feature type="strand" evidence="15">
    <location>
        <begin position="284"/>
        <end position="292"/>
    </location>
</feature>
<feature type="strand" evidence="15">
    <location>
        <begin position="298"/>
        <end position="308"/>
    </location>
</feature>
<feature type="helix" evidence="15">
    <location>
        <begin position="309"/>
        <end position="311"/>
    </location>
</feature>
<protein>
    <recommendedName>
        <fullName evidence="11">Orange carotenoid-binding protein</fullName>
        <shortName evidence="11">OCP</shortName>
    </recommendedName>
    <component>
        <recommendedName>
            <fullName evidence="11">Red carotenoid-binding protein</fullName>
            <shortName evidence="11">RCP</shortName>
        </recommendedName>
    </component>
</protein>
<sequence length="317" mass="34659">MPFTIDSARGIFPNTLAADVVPATIARFSQLNAEDQLALIWFAYLEMGKTLTIAAPGAASMQLAENALKEIQAMGPLQQTQAMCDLANRADTPLCRTYASWSPNIKLGFWYRLGELMEQGFVAPIPAGYQLSANANAVLATIQGLESGQQITVLRNAVVDMGFTAGKDGKRIAEPVVPPQDTASRTKVSIEGVTNATVLNYMDNLNANDFDTLIELFTSDGALQPPFQRPIVGKENVLRFFREECQNLKLIPERGVTEPAEDGFTQIKVTGKVQTPWFGGNVGMNIAWRFLLNPEGKIFFVAIDLLASPKELLNFAR</sequence>
<proteinExistence type="evidence at protein level"/>
<comment type="function">
    <text evidence="2 3 4 5 6 7 8">Acts as a blue-light photoreceptor and photo-protectant. Essential for inhibiting damaged induced by excess blue-green light via a process known as non-photochemical quenching (NPQ) (PubMed:16531492, PubMed:18687902, PubMed:20368334). In the dark or dim light the stable inactive form (OCP-O) is orange, upon illumination with blue-green light it converts to a metastable active red form (OCP-R), inducing energy dissipation, quenching cellular fluorescence via NPQ (PubMed:18687902, PubMed:20368334). One OCP-R molecule is sufficient to quench 1 phycobilisome (PubMed:21764991). More OCP-R accumulates under high-light and low temperature; in the dark OCP-R spontaneously reverts to OCP-O (PubMed:18687902). Reversion of OCP-O is accelerated by FRP (PubMed:20534537, PubMed:23716688). A kinetic study suggests conversion of OCP-O to OCP-R is limited by cis-trans proline isomerization of either Gln224-Pro225 or Pro225-Pro226 (PubMed:21907180).</text>
</comment>
<comment type="cofactor">
    <cofactor evidence="3 4">
        <name>3'-hydroxyechinenone</name>
        <dbReference type="ChEBI" id="CHEBI:80214"/>
    </cofactor>
    <text evidence="4 9">Binds 1 carotenoid molecule per subunit (3'-hydroxyechinenone is the physiological carotenoid, echinenone (70%), 3'-hydroxyechinenone (16%) or zeaxanthin (14%) were all detected in overexpressed, crystallized protein), makes contacts with both domains of the whole protein (PubMed:20368334). Upon RCP generation the carotenoid translocates 12 Angstroms into the N-terminal domain, altering its binding and photochemical properties (PubMed:26113721).</text>
</comment>
<comment type="biophysicochemical properties">
    <absorption>
        <max>~495 nm</max>
        <text evidence="3 4">A double maxima at 467 and 495 nm is seen for the orange (inactive) form, the red (active) form has a single maximum at ~505 nm.</text>
    </absorption>
</comment>
<comment type="subunit">
    <text evidence="4 5 6 8">Monomer (PubMed:20368334). Interacts with the APC core of the phycobilisome (PB), probably at a ratio of 1:1 in a light-independent manner; possibly only OCP-R binds to PBs. Interacts with FRP (PubMed:20534537, PubMed:23716688). Detachment from PBs is accelerated by FPR (PubMed:21764991).</text>
</comment>
<comment type="interaction">
    <interactant intactId="EBI-1618104">
        <id>P74102</id>
    </interactant>
    <interactant intactId="EBI-1618115">
        <id>P74103</id>
        <label>frp</label>
    </interactant>
    <organismsDiffer>false</organismsDiffer>
    <experiments>2</experiments>
</comment>
<comment type="subcellular location">
    <subcellularLocation>
        <location evidence="2">Cellular thylakoid membrane</location>
        <topology evidence="12">Peripheral membrane protein</topology>
        <orientation evidence="2">Cytoplasmic side</orientation>
    </subcellularLocation>
    <text evidence="2">Associated with the phycobilisome on the cytoplasmic side of the thylakoid membrane (PubMed:16531492).</text>
</comment>
<comment type="induction">
    <text evidence="5">Transcribed from its own promoter, it may also be cotranscribed with downstream frp.</text>
</comment>
<comment type="domain">
    <text evidence="8 9">Binds FRP via the C-terminal domain (residues 170-317) (PubMed:23716688). Upon RCP generation the carotenoid translocates 12 Angstroms into the N-terminal domain, altering its binding and photochemical properties (PubMed:26113721).</text>
</comment>
<comment type="PTM">
    <text evidence="10">Proteolytically cleaved into a red 16.7 kDa form named red carotenoid-binding protein (RCP) which lacks 15 residues from the N-terminus and approximately 150 residues from the C-terminus (PubMed:9398074).</text>
</comment>
<comment type="mass spectrometry" mass="34622.0" method="MALDI" evidence="10">
    <molecule>Orange carotenoid-binding protein</molecule>
    <text>OCP.</text>
</comment>
<comment type="mass spectrometry" mass="16739.0" method="MALDI" evidence="10">
    <molecule>Red carotenoid-binding protein</molecule>
    <text>RCP.</text>
</comment>
<comment type="disruption phenotype">
    <text evidence="2">Loss of NPQ induced by strong white or blue-green light, cells are more sensitive to high light.</text>
</comment>
<comment type="similarity">
    <text evidence="1 12">Belongs to the orange carotenoid-binding protein family.</text>
</comment>
<keyword id="KW-0002">3D-structure</keyword>
<keyword id="KW-0042">Antenna complex</keyword>
<keyword id="KW-0157">Chromophore</keyword>
<keyword id="KW-0903">Direct protein sequencing</keyword>
<keyword id="KW-0472">Membrane</keyword>
<keyword id="KW-0600">Photoreceptor protein</keyword>
<keyword id="KW-0605">Phycobilisome</keyword>
<keyword id="KW-0675">Receptor</keyword>
<keyword id="KW-1185">Reference proteome</keyword>
<keyword id="KW-0716">Sensory transduction</keyword>
<keyword id="KW-0793">Thylakoid</keyword>
<dbReference type="EMBL" id="BA000022">
    <property type="protein sequence ID" value="BAA18188.1"/>
    <property type="molecule type" value="Genomic_DNA"/>
</dbReference>
<dbReference type="PIR" id="S75627">
    <property type="entry name" value="S75627"/>
</dbReference>
<dbReference type="PDB" id="3MG1">
    <property type="method" value="X-ray"/>
    <property type="resolution" value="1.65 A"/>
    <property type="chains" value="A/B=1-316"/>
</dbReference>
<dbReference type="PDB" id="3MG2">
    <property type="method" value="X-ray"/>
    <property type="resolution" value="2.65 A"/>
    <property type="chains" value="A/B=1-316"/>
</dbReference>
<dbReference type="PDB" id="3MG3">
    <property type="method" value="X-ray"/>
    <property type="resolution" value="1.70 A"/>
    <property type="chains" value="A/B=1-316"/>
</dbReference>
<dbReference type="PDB" id="4XB4">
    <property type="method" value="X-ray"/>
    <property type="resolution" value="1.54 A"/>
    <property type="chains" value="A/B=21-165"/>
</dbReference>
<dbReference type="PDB" id="4XB5">
    <property type="method" value="X-ray"/>
    <property type="resolution" value="1.90 A"/>
    <property type="chains" value="A=2-317"/>
</dbReference>
<dbReference type="PDB" id="5TUW">
    <property type="method" value="X-ray"/>
    <property type="resolution" value="2.30 A"/>
    <property type="chains" value="A/B/C/D/E/F=1-317"/>
</dbReference>
<dbReference type="PDB" id="5TUX">
    <property type="method" value="X-ray"/>
    <property type="resolution" value="1.50 A"/>
    <property type="chains" value="A=1-317"/>
</dbReference>
<dbReference type="PDB" id="5TV0">
    <property type="method" value="X-ray"/>
    <property type="resolution" value="1.65 A"/>
    <property type="chains" value="A=1-317"/>
</dbReference>
<dbReference type="PDB" id="6T6K">
    <property type="method" value="X-ray"/>
    <property type="resolution" value="1.37 A"/>
    <property type="chains" value="A=1-317"/>
</dbReference>
<dbReference type="PDB" id="6T6M">
    <property type="method" value="X-ray"/>
    <property type="resolution" value="1.49 A"/>
    <property type="chains" value="A=1-317"/>
</dbReference>
<dbReference type="PDB" id="6T6O">
    <property type="method" value="X-ray"/>
    <property type="resolution" value="1.40 A"/>
    <property type="chains" value="A=1-317"/>
</dbReference>
<dbReference type="PDB" id="7SC9">
    <property type="method" value="EM"/>
    <property type="resolution" value="2.60 A"/>
    <property type="chains" value="BH/CQ/DI/EA=1-317"/>
</dbReference>
<dbReference type="PDB" id="7SCB">
    <property type="method" value="EM"/>
    <property type="resolution" value="2.50 A"/>
    <property type="chains" value="BH=1-317"/>
</dbReference>
<dbReference type="PDB" id="7SCC">
    <property type="method" value="EM"/>
    <property type="resolution" value="2.60 A"/>
    <property type="chains" value="AS/AT/BO/BP=1-317"/>
</dbReference>
<dbReference type="PDB" id="7ZSF">
    <property type="method" value="X-ray"/>
    <property type="resolution" value="1.36 A"/>
    <property type="chains" value="A=1-317"/>
</dbReference>
<dbReference type="PDB" id="7ZSG">
    <property type="method" value="X-ray"/>
    <property type="resolution" value="1.39 A"/>
    <property type="chains" value="1=1-317"/>
</dbReference>
<dbReference type="PDB" id="7ZSH">
    <property type="method" value="X-ray"/>
    <property type="resolution" value="1.42 A"/>
    <property type="chains" value="1=1-317"/>
</dbReference>
<dbReference type="PDB" id="7ZSI">
    <property type="method" value="X-ray"/>
    <property type="resolution" value="1.40 A"/>
    <property type="chains" value="1=1-317"/>
</dbReference>
<dbReference type="PDB" id="7ZSJ">
    <property type="method" value="X-ray"/>
    <property type="resolution" value="1.41 A"/>
    <property type="chains" value="1=1-317"/>
</dbReference>
<dbReference type="PDB" id="7ZXV">
    <property type="method" value="X-ray"/>
    <property type="resolution" value="1.80 A"/>
    <property type="chains" value="A=1-317"/>
</dbReference>
<dbReference type="PDB" id="8TO2">
    <property type="method" value="EM"/>
    <property type="resolution" value="2.00 A"/>
    <property type="chains" value="B=1-317"/>
</dbReference>
<dbReference type="PDB" id="8TPJ">
    <property type="method" value="EM"/>
    <property type="resolution" value="2.10 A"/>
    <property type="chains" value="B/b=1-317"/>
</dbReference>
<dbReference type="PDBsum" id="3MG1"/>
<dbReference type="PDBsum" id="3MG2"/>
<dbReference type="PDBsum" id="3MG3"/>
<dbReference type="PDBsum" id="4XB4"/>
<dbReference type="PDBsum" id="4XB5"/>
<dbReference type="PDBsum" id="5TUW"/>
<dbReference type="PDBsum" id="5TUX"/>
<dbReference type="PDBsum" id="5TV0"/>
<dbReference type="PDBsum" id="6T6K"/>
<dbReference type="PDBsum" id="6T6M"/>
<dbReference type="PDBsum" id="6T6O"/>
<dbReference type="PDBsum" id="7SC9"/>
<dbReference type="PDBsum" id="7SCB"/>
<dbReference type="PDBsum" id="7SCC"/>
<dbReference type="PDBsum" id="7ZSF"/>
<dbReference type="PDBsum" id="7ZSG"/>
<dbReference type="PDBsum" id="7ZSH"/>
<dbReference type="PDBsum" id="7ZSI"/>
<dbReference type="PDBsum" id="7ZSJ"/>
<dbReference type="PDBsum" id="7ZXV"/>
<dbReference type="PDBsum" id="8TO2"/>
<dbReference type="PDBsum" id="8TPJ"/>
<dbReference type="EMDB" id="EMD-25030"/>
<dbReference type="EMDB" id="EMD-25032"/>
<dbReference type="EMDB" id="EMD-25033"/>
<dbReference type="EMDB" id="EMD-41434"/>
<dbReference type="EMDB" id="EMD-41475"/>
<dbReference type="SASBDB" id="P74102"/>
<dbReference type="SMR" id="P74102"/>
<dbReference type="DIP" id="DIP-59343N"/>
<dbReference type="IntAct" id="P74102">
    <property type="interactions" value="2"/>
</dbReference>
<dbReference type="STRING" id="1148.gene:10499061"/>
<dbReference type="PaxDb" id="1148-1653273"/>
<dbReference type="EnsemblBacteria" id="BAA18188">
    <property type="protein sequence ID" value="BAA18188"/>
    <property type="gene ID" value="BAA18188"/>
</dbReference>
<dbReference type="KEGG" id="syn:slr1963"/>
<dbReference type="eggNOG" id="COG3631">
    <property type="taxonomic scope" value="Bacteria"/>
</dbReference>
<dbReference type="InParanoid" id="P74102"/>
<dbReference type="PhylomeDB" id="P74102"/>
<dbReference type="EvolutionaryTrace" id="P74102"/>
<dbReference type="Proteomes" id="UP000001425">
    <property type="component" value="Chromosome"/>
</dbReference>
<dbReference type="GO" id="GO:0030089">
    <property type="term" value="C:phycobilisome"/>
    <property type="evidence" value="ECO:0007669"/>
    <property type="project" value="UniProtKB-KW"/>
</dbReference>
<dbReference type="GO" id="GO:0031676">
    <property type="term" value="C:plasma membrane-derived thylakoid membrane"/>
    <property type="evidence" value="ECO:0007669"/>
    <property type="project" value="UniProtKB-SubCell"/>
</dbReference>
<dbReference type="GO" id="GO:0031404">
    <property type="term" value="F:chloride ion binding"/>
    <property type="evidence" value="ECO:0007669"/>
    <property type="project" value="InterPro"/>
</dbReference>
<dbReference type="GO" id="GO:0009881">
    <property type="term" value="F:photoreceptor activity"/>
    <property type="evidence" value="ECO:0007669"/>
    <property type="project" value="UniProtKB-KW"/>
</dbReference>
<dbReference type="GO" id="GO:0016037">
    <property type="term" value="P:light absorption"/>
    <property type="evidence" value="ECO:0007669"/>
    <property type="project" value="InterPro"/>
</dbReference>
<dbReference type="Gene3D" id="3.10.450.50">
    <property type="match status" value="1"/>
</dbReference>
<dbReference type="Gene3D" id="1.10.2090.10">
    <property type="entry name" value="Orange carotenoid-binding protein, N-terminal domain"/>
    <property type="match status" value="1"/>
</dbReference>
<dbReference type="InterPro" id="IPR032710">
    <property type="entry name" value="NTF2-like_dom_sf"/>
</dbReference>
<dbReference type="InterPro" id="IPR002075">
    <property type="entry name" value="NTF2_dom"/>
</dbReference>
<dbReference type="InterPro" id="IPR015233">
    <property type="entry name" value="Orange_carotenoid-bd_N"/>
</dbReference>
<dbReference type="InterPro" id="IPR036917">
    <property type="entry name" value="Orange_carotenoid-bd_N_sf"/>
</dbReference>
<dbReference type="Pfam" id="PF09150">
    <property type="entry name" value="Carot_N"/>
    <property type="match status" value="1"/>
</dbReference>
<dbReference type="Pfam" id="PF02136">
    <property type="entry name" value="NTF2"/>
    <property type="match status" value="1"/>
</dbReference>
<dbReference type="SUPFAM" id="SSF54427">
    <property type="entry name" value="NTF2-like"/>
    <property type="match status" value="1"/>
</dbReference>
<dbReference type="SUPFAM" id="SSF81930">
    <property type="entry name" value="Orange carotenoid protein, N-terminal domain"/>
    <property type="match status" value="1"/>
</dbReference>
<dbReference type="PROSITE" id="PS51773">
    <property type="entry name" value="OCP_N"/>
    <property type="match status" value="1"/>
</dbReference>